<evidence type="ECO:0000255" key="1">
    <source>
        <dbReference type="HAMAP-Rule" id="MF_01849"/>
    </source>
</evidence>
<evidence type="ECO:0000255" key="2">
    <source>
        <dbReference type="PROSITE-ProRule" id="PRU01266"/>
    </source>
</evidence>
<reference key="1">
    <citation type="submission" date="2006-06" db="EMBL/GenBank/DDBJ databases">
        <title>Complete sequence of chromosome of Mycobacterium sp. MCS.</title>
        <authorList>
            <consortium name="US DOE Joint Genome Institute"/>
            <person name="Copeland A."/>
            <person name="Lucas S."/>
            <person name="Lapidus A."/>
            <person name="Barry K."/>
            <person name="Detter J.C."/>
            <person name="Glavina del Rio T."/>
            <person name="Hammon N."/>
            <person name="Israni S."/>
            <person name="Dalin E."/>
            <person name="Tice H."/>
            <person name="Pitluck S."/>
            <person name="Martinez M."/>
            <person name="Schmutz J."/>
            <person name="Larimer F."/>
            <person name="Land M."/>
            <person name="Hauser L."/>
            <person name="Kyrpides N."/>
            <person name="Kim E."/>
            <person name="Miller C.D."/>
            <person name="Hughes J.E."/>
            <person name="Anderson A.J."/>
            <person name="Sims R.C."/>
            <person name="Richardson P."/>
        </authorList>
    </citation>
    <scope>NUCLEOTIDE SEQUENCE [LARGE SCALE GENOMIC DNA]</scope>
    <source>
        <strain>MCS</strain>
    </source>
</reference>
<keyword id="KW-0004">4Fe-4S</keyword>
<keyword id="KW-0963">Cytoplasm</keyword>
<keyword id="KW-1015">Disulfide bond</keyword>
<keyword id="KW-0408">Iron</keyword>
<keyword id="KW-0411">Iron-sulfur</keyword>
<keyword id="KW-0479">Metal-binding</keyword>
<keyword id="KW-0489">Methyltransferase</keyword>
<keyword id="KW-0698">rRNA processing</keyword>
<keyword id="KW-0949">S-adenosyl-L-methionine</keyword>
<keyword id="KW-0808">Transferase</keyword>
<keyword id="KW-0819">tRNA processing</keyword>
<proteinExistence type="inferred from homology"/>
<feature type="chain" id="PRO_0000350267" description="Probable dual-specificity RNA methyltransferase RlmN">
    <location>
        <begin position="1"/>
        <end position="374"/>
    </location>
</feature>
<feature type="domain" description="Radical SAM core" evidence="2">
    <location>
        <begin position="114"/>
        <end position="361"/>
    </location>
</feature>
<feature type="active site" description="Proton acceptor" evidence="1">
    <location>
        <position position="108"/>
    </location>
</feature>
<feature type="active site" description="S-methylcysteine intermediate" evidence="1">
    <location>
        <position position="367"/>
    </location>
</feature>
<feature type="binding site" evidence="1">
    <location>
        <position position="128"/>
    </location>
    <ligand>
        <name>[4Fe-4S] cluster</name>
        <dbReference type="ChEBI" id="CHEBI:49883"/>
        <note>4Fe-4S-S-AdoMet</note>
    </ligand>
</feature>
<feature type="binding site" evidence="1">
    <location>
        <position position="132"/>
    </location>
    <ligand>
        <name>[4Fe-4S] cluster</name>
        <dbReference type="ChEBI" id="CHEBI:49883"/>
        <note>4Fe-4S-S-AdoMet</note>
    </ligand>
</feature>
<feature type="binding site" evidence="1">
    <location>
        <position position="135"/>
    </location>
    <ligand>
        <name>[4Fe-4S] cluster</name>
        <dbReference type="ChEBI" id="CHEBI:49883"/>
        <note>4Fe-4S-S-AdoMet</note>
    </ligand>
</feature>
<feature type="binding site" evidence="1">
    <location>
        <begin position="188"/>
        <end position="189"/>
    </location>
    <ligand>
        <name>S-adenosyl-L-methionine</name>
        <dbReference type="ChEBI" id="CHEBI:59789"/>
    </ligand>
</feature>
<feature type="binding site" evidence="1">
    <location>
        <position position="222"/>
    </location>
    <ligand>
        <name>S-adenosyl-L-methionine</name>
        <dbReference type="ChEBI" id="CHEBI:59789"/>
    </ligand>
</feature>
<feature type="binding site" evidence="1">
    <location>
        <begin position="245"/>
        <end position="247"/>
    </location>
    <ligand>
        <name>S-adenosyl-L-methionine</name>
        <dbReference type="ChEBI" id="CHEBI:59789"/>
    </ligand>
</feature>
<feature type="binding site" evidence="1">
    <location>
        <position position="324"/>
    </location>
    <ligand>
        <name>S-adenosyl-L-methionine</name>
        <dbReference type="ChEBI" id="CHEBI:59789"/>
    </ligand>
</feature>
<feature type="disulfide bond" description="(transient)" evidence="1">
    <location>
        <begin position="121"/>
        <end position="367"/>
    </location>
</feature>
<sequence length="374" mass="40544">MPNPLPLVFDAPRRAKPPRHFADLDATARAAAVAELGLPAFRAKQLATQYYGRLTADPQQMTDLPAAVREQVAEALFPDLLTAVREIETDAGETRKVLWRAVDGTTFESVLMRYSDRNTVCISSQAGCGMACPFCATGQGGLQRNLSTAEILEQVRAAAVELRDRDGEGIAPAARGGRLSNIVFMGMGEPLANYNRVIAAVRRIVAPPPDGFGISARSVTVSTVGLAPAIRKLADERLNVTLALSLHAPDDELRDTLVPVNNRWKVSEALDAARYYADVTGRRVSIEYALIRDVNDQPWRADLLGKRLHGALGPLVHVNVIPLNPTPGSEWDASPKPAEREFVRRVRERGVSCTVRDTRGREIAAACGQLAAEG</sequence>
<dbReference type="EC" id="2.1.1.192" evidence="1"/>
<dbReference type="EMBL" id="CP000384">
    <property type="protein sequence ID" value="ABG08115.1"/>
    <property type="molecule type" value="Genomic_DNA"/>
</dbReference>
<dbReference type="SMR" id="Q1BAG9"/>
<dbReference type="KEGG" id="mmc:Mmcs_2006"/>
<dbReference type="HOGENOM" id="CLU_029101_0_2_11"/>
<dbReference type="BioCyc" id="MSP164756:G1G6O-2052-MONOMER"/>
<dbReference type="GO" id="GO:0005737">
    <property type="term" value="C:cytoplasm"/>
    <property type="evidence" value="ECO:0007669"/>
    <property type="project" value="UniProtKB-SubCell"/>
</dbReference>
<dbReference type="GO" id="GO:0051539">
    <property type="term" value="F:4 iron, 4 sulfur cluster binding"/>
    <property type="evidence" value="ECO:0007669"/>
    <property type="project" value="UniProtKB-UniRule"/>
</dbReference>
<dbReference type="GO" id="GO:0046872">
    <property type="term" value="F:metal ion binding"/>
    <property type="evidence" value="ECO:0007669"/>
    <property type="project" value="UniProtKB-KW"/>
</dbReference>
<dbReference type="GO" id="GO:0070040">
    <property type="term" value="F:rRNA (adenine(2503)-C2-)-methyltransferase activity"/>
    <property type="evidence" value="ECO:0007669"/>
    <property type="project" value="UniProtKB-UniRule"/>
</dbReference>
<dbReference type="GO" id="GO:0019843">
    <property type="term" value="F:rRNA binding"/>
    <property type="evidence" value="ECO:0007669"/>
    <property type="project" value="UniProtKB-UniRule"/>
</dbReference>
<dbReference type="GO" id="GO:0002935">
    <property type="term" value="F:tRNA (adenine(37)-C2)-methyltransferase activity"/>
    <property type="evidence" value="ECO:0007669"/>
    <property type="project" value="UniProtKB-UniRule"/>
</dbReference>
<dbReference type="GO" id="GO:0000049">
    <property type="term" value="F:tRNA binding"/>
    <property type="evidence" value="ECO:0007669"/>
    <property type="project" value="UniProtKB-UniRule"/>
</dbReference>
<dbReference type="GO" id="GO:0070475">
    <property type="term" value="P:rRNA base methylation"/>
    <property type="evidence" value="ECO:0007669"/>
    <property type="project" value="UniProtKB-UniRule"/>
</dbReference>
<dbReference type="GO" id="GO:0030488">
    <property type="term" value="P:tRNA methylation"/>
    <property type="evidence" value="ECO:0007669"/>
    <property type="project" value="UniProtKB-UniRule"/>
</dbReference>
<dbReference type="CDD" id="cd01335">
    <property type="entry name" value="Radical_SAM"/>
    <property type="match status" value="1"/>
</dbReference>
<dbReference type="FunFam" id="3.20.20.70:FF:000014">
    <property type="entry name" value="Probable dual-specificity RNA methyltransferase RlmN"/>
    <property type="match status" value="1"/>
</dbReference>
<dbReference type="Gene3D" id="1.10.150.530">
    <property type="match status" value="1"/>
</dbReference>
<dbReference type="Gene3D" id="3.20.20.70">
    <property type="entry name" value="Aldolase class I"/>
    <property type="match status" value="1"/>
</dbReference>
<dbReference type="HAMAP" id="MF_01849">
    <property type="entry name" value="RNA_methyltr_RlmN"/>
    <property type="match status" value="1"/>
</dbReference>
<dbReference type="InterPro" id="IPR013785">
    <property type="entry name" value="Aldolase_TIM"/>
</dbReference>
<dbReference type="InterPro" id="IPR040072">
    <property type="entry name" value="Methyltransferase_A"/>
</dbReference>
<dbReference type="InterPro" id="IPR027492">
    <property type="entry name" value="RNA_MTrfase_RlmN"/>
</dbReference>
<dbReference type="InterPro" id="IPR004383">
    <property type="entry name" value="rRNA_lsu_MTrfase_RlmN/Cfr"/>
</dbReference>
<dbReference type="InterPro" id="IPR007197">
    <property type="entry name" value="rSAM"/>
</dbReference>
<dbReference type="NCBIfam" id="TIGR00048">
    <property type="entry name" value="rRNA_mod_RlmN"/>
    <property type="match status" value="1"/>
</dbReference>
<dbReference type="PANTHER" id="PTHR30544">
    <property type="entry name" value="23S RRNA METHYLTRANSFERASE"/>
    <property type="match status" value="1"/>
</dbReference>
<dbReference type="PANTHER" id="PTHR30544:SF5">
    <property type="entry name" value="RADICAL SAM CORE DOMAIN-CONTAINING PROTEIN"/>
    <property type="match status" value="1"/>
</dbReference>
<dbReference type="Pfam" id="PF04055">
    <property type="entry name" value="Radical_SAM"/>
    <property type="match status" value="1"/>
</dbReference>
<dbReference type="PIRSF" id="PIRSF006004">
    <property type="entry name" value="CHP00048"/>
    <property type="match status" value="1"/>
</dbReference>
<dbReference type="SFLD" id="SFLDF00275">
    <property type="entry name" value="adenosine_C2_methyltransferase"/>
    <property type="match status" value="1"/>
</dbReference>
<dbReference type="SFLD" id="SFLDG01062">
    <property type="entry name" value="methyltransferase_(Class_A)"/>
    <property type="match status" value="1"/>
</dbReference>
<dbReference type="SUPFAM" id="SSF102114">
    <property type="entry name" value="Radical SAM enzymes"/>
    <property type="match status" value="1"/>
</dbReference>
<dbReference type="PROSITE" id="PS51918">
    <property type="entry name" value="RADICAL_SAM"/>
    <property type="match status" value="1"/>
</dbReference>
<protein>
    <recommendedName>
        <fullName evidence="1">Probable dual-specificity RNA methyltransferase RlmN</fullName>
        <ecNumber evidence="1">2.1.1.192</ecNumber>
    </recommendedName>
    <alternativeName>
        <fullName evidence="1">23S rRNA (adenine(2503)-C(2))-methyltransferase</fullName>
    </alternativeName>
    <alternativeName>
        <fullName evidence="1">23S rRNA m2A2503 methyltransferase</fullName>
    </alternativeName>
    <alternativeName>
        <fullName evidence="1">Ribosomal RNA large subunit methyltransferase N</fullName>
    </alternativeName>
    <alternativeName>
        <fullName evidence="1">tRNA (adenine(37)-C(2))-methyltransferase</fullName>
    </alternativeName>
    <alternativeName>
        <fullName evidence="1">tRNA m2A37 methyltransferase</fullName>
    </alternativeName>
</protein>
<gene>
    <name evidence="1" type="primary">rlmN</name>
    <name type="ordered locus">Mmcs_2006</name>
</gene>
<comment type="function">
    <text evidence="1">Specifically methylates position 2 of adenine 2503 in 23S rRNA and position 2 of adenine 37 in tRNAs.</text>
</comment>
<comment type="catalytic activity">
    <reaction evidence="1">
        <text>adenosine(2503) in 23S rRNA + 2 reduced [2Fe-2S]-[ferredoxin] + 2 S-adenosyl-L-methionine = 2-methyladenosine(2503) in 23S rRNA + 5'-deoxyadenosine + L-methionine + 2 oxidized [2Fe-2S]-[ferredoxin] + S-adenosyl-L-homocysteine</text>
        <dbReference type="Rhea" id="RHEA:42916"/>
        <dbReference type="Rhea" id="RHEA-COMP:10000"/>
        <dbReference type="Rhea" id="RHEA-COMP:10001"/>
        <dbReference type="Rhea" id="RHEA-COMP:10152"/>
        <dbReference type="Rhea" id="RHEA-COMP:10282"/>
        <dbReference type="ChEBI" id="CHEBI:17319"/>
        <dbReference type="ChEBI" id="CHEBI:33737"/>
        <dbReference type="ChEBI" id="CHEBI:33738"/>
        <dbReference type="ChEBI" id="CHEBI:57844"/>
        <dbReference type="ChEBI" id="CHEBI:57856"/>
        <dbReference type="ChEBI" id="CHEBI:59789"/>
        <dbReference type="ChEBI" id="CHEBI:74411"/>
        <dbReference type="ChEBI" id="CHEBI:74497"/>
        <dbReference type="EC" id="2.1.1.192"/>
    </reaction>
</comment>
<comment type="catalytic activity">
    <reaction evidence="1">
        <text>adenosine(37) in tRNA + 2 reduced [2Fe-2S]-[ferredoxin] + 2 S-adenosyl-L-methionine = 2-methyladenosine(37) in tRNA + 5'-deoxyadenosine + L-methionine + 2 oxidized [2Fe-2S]-[ferredoxin] + S-adenosyl-L-homocysteine</text>
        <dbReference type="Rhea" id="RHEA:43332"/>
        <dbReference type="Rhea" id="RHEA-COMP:10000"/>
        <dbReference type="Rhea" id="RHEA-COMP:10001"/>
        <dbReference type="Rhea" id="RHEA-COMP:10162"/>
        <dbReference type="Rhea" id="RHEA-COMP:10485"/>
        <dbReference type="ChEBI" id="CHEBI:17319"/>
        <dbReference type="ChEBI" id="CHEBI:33737"/>
        <dbReference type="ChEBI" id="CHEBI:33738"/>
        <dbReference type="ChEBI" id="CHEBI:57844"/>
        <dbReference type="ChEBI" id="CHEBI:57856"/>
        <dbReference type="ChEBI" id="CHEBI:59789"/>
        <dbReference type="ChEBI" id="CHEBI:74411"/>
        <dbReference type="ChEBI" id="CHEBI:74497"/>
        <dbReference type="EC" id="2.1.1.192"/>
    </reaction>
</comment>
<comment type="cofactor">
    <cofactor evidence="1">
        <name>[4Fe-4S] cluster</name>
        <dbReference type="ChEBI" id="CHEBI:49883"/>
    </cofactor>
    <text evidence="1">Binds 1 [4Fe-4S] cluster. The cluster is coordinated with 3 cysteines and an exchangeable S-adenosyl-L-methionine.</text>
</comment>
<comment type="subcellular location">
    <subcellularLocation>
        <location evidence="1">Cytoplasm</location>
    </subcellularLocation>
</comment>
<comment type="miscellaneous">
    <text evidence="1">Reaction proceeds by a ping-pong mechanism involving intermediate methylation of a conserved cysteine residue.</text>
</comment>
<comment type="similarity">
    <text evidence="1">Belongs to the radical SAM superfamily. RlmN family.</text>
</comment>
<organism>
    <name type="scientific">Mycobacterium sp. (strain MCS)</name>
    <dbReference type="NCBI Taxonomy" id="164756"/>
    <lineage>
        <taxon>Bacteria</taxon>
        <taxon>Bacillati</taxon>
        <taxon>Actinomycetota</taxon>
        <taxon>Actinomycetes</taxon>
        <taxon>Mycobacteriales</taxon>
        <taxon>Mycobacteriaceae</taxon>
        <taxon>Mycobacterium</taxon>
    </lineage>
</organism>
<name>RLMN_MYCSS</name>
<accession>Q1BAG9</accession>